<sequence>MAGHSQFKNIMHRKGRQDAVRSKMFSKLAREITVAAKQGLPDPAMNPRLRLAIQNAKAQSMPKDNIERAIKKAAGNDGENYDEVRYEGRGPGGVSVIVEALTDNRNRTASNVRAAFTKSGGSLGETGSVSFMFDRVGEIVYKPEAGDADKVMEAAIEAGAEDVQSGEDGHVILCAFEDIGEVSKALEAALGEAESIKTIWKPQTNTELDEEKARSVLKLLSVLEDDDDVQNVYTNFEVSDEVMEKLSA</sequence>
<protein>
    <recommendedName>
        <fullName evidence="1">Probable transcriptional regulatory protein BruAb1_1702</fullName>
    </recommendedName>
</protein>
<reference key="1">
    <citation type="journal article" date="2005" name="J. Bacteriol.">
        <title>Completion of the genome sequence of Brucella abortus and comparison to the highly similar genomes of Brucella melitensis and Brucella suis.</title>
        <authorList>
            <person name="Halling S.M."/>
            <person name="Peterson-Burch B.D."/>
            <person name="Bricker B.J."/>
            <person name="Zuerner R.L."/>
            <person name="Qing Z."/>
            <person name="Li L.-L."/>
            <person name="Kapur V."/>
            <person name="Alt D.P."/>
            <person name="Olsen S.C."/>
        </authorList>
    </citation>
    <scope>NUCLEOTIDE SEQUENCE [LARGE SCALE GENOMIC DNA]</scope>
    <source>
        <strain>9-941</strain>
    </source>
</reference>
<organism>
    <name type="scientific">Brucella abortus biovar 1 (strain 9-941)</name>
    <dbReference type="NCBI Taxonomy" id="262698"/>
    <lineage>
        <taxon>Bacteria</taxon>
        <taxon>Pseudomonadati</taxon>
        <taxon>Pseudomonadota</taxon>
        <taxon>Alphaproteobacteria</taxon>
        <taxon>Hyphomicrobiales</taxon>
        <taxon>Brucellaceae</taxon>
        <taxon>Brucella/Ochrobactrum group</taxon>
        <taxon>Brucella</taxon>
    </lineage>
</organism>
<gene>
    <name type="ordered locus">BruAb1_1702</name>
</gene>
<dbReference type="EMBL" id="AE017223">
    <property type="protein sequence ID" value="AAX75021.1"/>
    <property type="molecule type" value="Genomic_DNA"/>
</dbReference>
<dbReference type="RefSeq" id="WP_002964805.1">
    <property type="nucleotide sequence ID" value="NC_006932.1"/>
</dbReference>
<dbReference type="SMR" id="Q57BG3"/>
<dbReference type="EnsemblBacteria" id="AAX75021">
    <property type="protein sequence ID" value="AAX75021"/>
    <property type="gene ID" value="BruAb1_1702"/>
</dbReference>
<dbReference type="KEGG" id="bmb:BruAb1_1702"/>
<dbReference type="HOGENOM" id="CLU_062974_2_2_5"/>
<dbReference type="Proteomes" id="UP000000540">
    <property type="component" value="Chromosome I"/>
</dbReference>
<dbReference type="GO" id="GO:0005829">
    <property type="term" value="C:cytosol"/>
    <property type="evidence" value="ECO:0007669"/>
    <property type="project" value="TreeGrafter"/>
</dbReference>
<dbReference type="GO" id="GO:0003677">
    <property type="term" value="F:DNA binding"/>
    <property type="evidence" value="ECO:0007669"/>
    <property type="project" value="UniProtKB-UniRule"/>
</dbReference>
<dbReference type="GO" id="GO:0006355">
    <property type="term" value="P:regulation of DNA-templated transcription"/>
    <property type="evidence" value="ECO:0007669"/>
    <property type="project" value="UniProtKB-UniRule"/>
</dbReference>
<dbReference type="FunFam" id="1.10.10.200:FF:000002">
    <property type="entry name" value="Probable transcriptional regulatory protein CLM62_37755"/>
    <property type="match status" value="1"/>
</dbReference>
<dbReference type="Gene3D" id="1.10.10.200">
    <property type="match status" value="1"/>
</dbReference>
<dbReference type="Gene3D" id="3.30.70.980">
    <property type="match status" value="2"/>
</dbReference>
<dbReference type="HAMAP" id="MF_00693">
    <property type="entry name" value="Transcrip_reg_TACO1"/>
    <property type="match status" value="1"/>
</dbReference>
<dbReference type="InterPro" id="IPR017856">
    <property type="entry name" value="Integrase-like_N"/>
</dbReference>
<dbReference type="InterPro" id="IPR048300">
    <property type="entry name" value="TACO1_YebC-like_2nd/3rd_dom"/>
</dbReference>
<dbReference type="InterPro" id="IPR049083">
    <property type="entry name" value="TACO1_YebC_N"/>
</dbReference>
<dbReference type="InterPro" id="IPR002876">
    <property type="entry name" value="Transcrip_reg_TACO1-like"/>
</dbReference>
<dbReference type="InterPro" id="IPR026564">
    <property type="entry name" value="Transcrip_reg_TACO1-like_dom3"/>
</dbReference>
<dbReference type="InterPro" id="IPR029072">
    <property type="entry name" value="YebC-like"/>
</dbReference>
<dbReference type="NCBIfam" id="NF001030">
    <property type="entry name" value="PRK00110.1"/>
    <property type="match status" value="1"/>
</dbReference>
<dbReference type="NCBIfam" id="NF009044">
    <property type="entry name" value="PRK12378.1"/>
    <property type="match status" value="1"/>
</dbReference>
<dbReference type="NCBIfam" id="TIGR01033">
    <property type="entry name" value="YebC/PmpR family DNA-binding transcriptional regulator"/>
    <property type="match status" value="1"/>
</dbReference>
<dbReference type="PANTHER" id="PTHR12532:SF6">
    <property type="entry name" value="TRANSCRIPTIONAL REGULATORY PROTEIN YEBC-RELATED"/>
    <property type="match status" value="1"/>
</dbReference>
<dbReference type="PANTHER" id="PTHR12532">
    <property type="entry name" value="TRANSLATIONAL ACTIVATOR OF CYTOCHROME C OXIDASE 1"/>
    <property type="match status" value="1"/>
</dbReference>
<dbReference type="Pfam" id="PF20772">
    <property type="entry name" value="TACO1_YebC_N"/>
    <property type="match status" value="1"/>
</dbReference>
<dbReference type="Pfam" id="PF01709">
    <property type="entry name" value="Transcrip_reg"/>
    <property type="match status" value="1"/>
</dbReference>
<dbReference type="SUPFAM" id="SSF75625">
    <property type="entry name" value="YebC-like"/>
    <property type="match status" value="1"/>
</dbReference>
<keyword id="KW-0963">Cytoplasm</keyword>
<keyword id="KW-0238">DNA-binding</keyword>
<keyword id="KW-0804">Transcription</keyword>
<keyword id="KW-0805">Transcription regulation</keyword>
<feature type="chain" id="PRO_0000257034" description="Probable transcriptional regulatory protein BruAb1_1702">
    <location>
        <begin position="1"/>
        <end position="248"/>
    </location>
</feature>
<evidence type="ECO:0000255" key="1">
    <source>
        <dbReference type="HAMAP-Rule" id="MF_00693"/>
    </source>
</evidence>
<proteinExistence type="inferred from homology"/>
<accession>Q57BG3</accession>
<comment type="subcellular location">
    <subcellularLocation>
        <location evidence="1">Cytoplasm</location>
    </subcellularLocation>
</comment>
<comment type="similarity">
    <text evidence="1">Belongs to the TACO1 family.</text>
</comment>
<name>Y1702_BRUAB</name>